<accession>Q81WI5</accession>
<accession>Q6HUN3</accession>
<accession>Q6KNW6</accession>
<name>PLSX_BACAN</name>
<sequence>MKIAIDAMGGDHAPKAVVLGAMKAIKEYSDLHITLVGKEEEIRQYLTSEERITILHTDEKIESTDEPVRAVRRKKQASMVLAAQQVKDGVADACISAGSTGALMAAGLFVVGRMEGIERPALSPTMPTVDGEGFVMLDVGANVDAKPIHLYQYAVMGSVYAEKVRGIKNPRVGLLNVGTEGGKGNELSKQVFAMLKDAPINFVGNVESRDLLQGVADVVVCDGFTGNVALKSLEGTALALFSMLKEQLMSSFTSKLAAAVLKPKLMVLKDKMDYSEYGGAALFGLKAPVIKAHGSSNDQSIFSAIRQTREMVAKEVIPTISSVMEKEPLQ</sequence>
<feature type="chain" id="PRO_0000189839" description="Phosphate acyltransferase">
    <location>
        <begin position="1"/>
        <end position="330"/>
    </location>
</feature>
<gene>
    <name evidence="1" type="primary">plsX</name>
    <name type="ordered locus">BA_3991</name>
    <name type="ordered locus">GBAA_3991</name>
    <name type="ordered locus">BAS3704</name>
</gene>
<reference key="1">
    <citation type="journal article" date="2003" name="Nature">
        <title>The genome sequence of Bacillus anthracis Ames and comparison to closely related bacteria.</title>
        <authorList>
            <person name="Read T.D."/>
            <person name="Peterson S.N."/>
            <person name="Tourasse N.J."/>
            <person name="Baillie L.W."/>
            <person name="Paulsen I.T."/>
            <person name="Nelson K.E."/>
            <person name="Tettelin H."/>
            <person name="Fouts D.E."/>
            <person name="Eisen J.A."/>
            <person name="Gill S.R."/>
            <person name="Holtzapple E.K."/>
            <person name="Okstad O.A."/>
            <person name="Helgason E."/>
            <person name="Rilstone J."/>
            <person name="Wu M."/>
            <person name="Kolonay J.F."/>
            <person name="Beanan M.J."/>
            <person name="Dodson R.J."/>
            <person name="Brinkac L.M."/>
            <person name="Gwinn M.L."/>
            <person name="DeBoy R.T."/>
            <person name="Madpu R."/>
            <person name="Daugherty S.C."/>
            <person name="Durkin A.S."/>
            <person name="Haft D.H."/>
            <person name="Nelson W.C."/>
            <person name="Peterson J.D."/>
            <person name="Pop M."/>
            <person name="Khouri H.M."/>
            <person name="Radune D."/>
            <person name="Benton J.L."/>
            <person name="Mahamoud Y."/>
            <person name="Jiang L."/>
            <person name="Hance I.R."/>
            <person name="Weidman J.F."/>
            <person name="Berry K.J."/>
            <person name="Plaut R.D."/>
            <person name="Wolf A.M."/>
            <person name="Watkins K.L."/>
            <person name="Nierman W.C."/>
            <person name="Hazen A."/>
            <person name="Cline R.T."/>
            <person name="Redmond C."/>
            <person name="Thwaite J.E."/>
            <person name="White O."/>
            <person name="Salzberg S.L."/>
            <person name="Thomason B."/>
            <person name="Friedlander A.M."/>
            <person name="Koehler T.M."/>
            <person name="Hanna P.C."/>
            <person name="Kolstoe A.-B."/>
            <person name="Fraser C.M."/>
        </authorList>
    </citation>
    <scope>NUCLEOTIDE SEQUENCE [LARGE SCALE GENOMIC DNA]</scope>
    <source>
        <strain>Ames / isolate Porton</strain>
    </source>
</reference>
<reference key="2">
    <citation type="journal article" date="2009" name="J. Bacteriol.">
        <title>The complete genome sequence of Bacillus anthracis Ames 'Ancestor'.</title>
        <authorList>
            <person name="Ravel J."/>
            <person name="Jiang L."/>
            <person name="Stanley S.T."/>
            <person name="Wilson M.R."/>
            <person name="Decker R.S."/>
            <person name="Read T.D."/>
            <person name="Worsham P."/>
            <person name="Keim P.S."/>
            <person name="Salzberg S.L."/>
            <person name="Fraser-Liggett C.M."/>
            <person name="Rasko D.A."/>
        </authorList>
    </citation>
    <scope>NUCLEOTIDE SEQUENCE [LARGE SCALE GENOMIC DNA]</scope>
    <source>
        <strain>Ames ancestor</strain>
    </source>
</reference>
<reference key="3">
    <citation type="submission" date="2004-01" db="EMBL/GenBank/DDBJ databases">
        <title>Complete genome sequence of Bacillus anthracis Sterne.</title>
        <authorList>
            <person name="Brettin T.S."/>
            <person name="Bruce D."/>
            <person name="Challacombe J.F."/>
            <person name="Gilna P."/>
            <person name="Han C."/>
            <person name="Hill K."/>
            <person name="Hitchcock P."/>
            <person name="Jackson P."/>
            <person name="Keim P."/>
            <person name="Longmire J."/>
            <person name="Lucas S."/>
            <person name="Okinaka R."/>
            <person name="Richardson P."/>
            <person name="Rubin E."/>
            <person name="Tice H."/>
        </authorList>
    </citation>
    <scope>NUCLEOTIDE SEQUENCE [LARGE SCALE GENOMIC DNA]</scope>
    <source>
        <strain>Sterne</strain>
    </source>
</reference>
<proteinExistence type="inferred from homology"/>
<protein>
    <recommendedName>
        <fullName evidence="1">Phosphate acyltransferase</fullName>
        <ecNumber evidence="1">2.3.1.274</ecNumber>
    </recommendedName>
    <alternativeName>
        <fullName evidence="1">Acyl-ACP phosphotransacylase</fullName>
    </alternativeName>
    <alternativeName>
        <fullName evidence="1">Acyl-[acyl-carrier-protein]--phosphate acyltransferase</fullName>
    </alternativeName>
    <alternativeName>
        <fullName evidence="1">Phosphate-acyl-ACP acyltransferase</fullName>
    </alternativeName>
</protein>
<organism>
    <name type="scientific">Bacillus anthracis</name>
    <dbReference type="NCBI Taxonomy" id="1392"/>
    <lineage>
        <taxon>Bacteria</taxon>
        <taxon>Bacillati</taxon>
        <taxon>Bacillota</taxon>
        <taxon>Bacilli</taxon>
        <taxon>Bacillales</taxon>
        <taxon>Bacillaceae</taxon>
        <taxon>Bacillus</taxon>
        <taxon>Bacillus cereus group</taxon>
    </lineage>
</organism>
<comment type="function">
    <text evidence="1">Catalyzes the reversible formation of acyl-phosphate (acyl-PO(4)) from acyl-[acyl-carrier-protein] (acyl-ACP). This enzyme utilizes acyl-ACP as fatty acyl donor, but not acyl-CoA.</text>
</comment>
<comment type="catalytic activity">
    <reaction evidence="1">
        <text>a fatty acyl-[ACP] + phosphate = an acyl phosphate + holo-[ACP]</text>
        <dbReference type="Rhea" id="RHEA:42292"/>
        <dbReference type="Rhea" id="RHEA-COMP:9685"/>
        <dbReference type="Rhea" id="RHEA-COMP:14125"/>
        <dbReference type="ChEBI" id="CHEBI:43474"/>
        <dbReference type="ChEBI" id="CHEBI:59918"/>
        <dbReference type="ChEBI" id="CHEBI:64479"/>
        <dbReference type="ChEBI" id="CHEBI:138651"/>
        <dbReference type="EC" id="2.3.1.274"/>
    </reaction>
</comment>
<comment type="pathway">
    <text evidence="1">Lipid metabolism; phospholipid metabolism.</text>
</comment>
<comment type="subunit">
    <text evidence="1">Homodimer. Probably interacts with PlsY.</text>
</comment>
<comment type="subcellular location">
    <subcellularLocation>
        <location evidence="1">Cytoplasm</location>
    </subcellularLocation>
    <text evidence="1">Associated with the membrane possibly through PlsY.</text>
</comment>
<comment type="similarity">
    <text evidence="1">Belongs to the PlsX family.</text>
</comment>
<keyword id="KW-0963">Cytoplasm</keyword>
<keyword id="KW-0444">Lipid biosynthesis</keyword>
<keyword id="KW-0443">Lipid metabolism</keyword>
<keyword id="KW-0594">Phospholipid biosynthesis</keyword>
<keyword id="KW-1208">Phospholipid metabolism</keyword>
<keyword id="KW-1185">Reference proteome</keyword>
<keyword id="KW-0808">Transferase</keyword>
<evidence type="ECO:0000255" key="1">
    <source>
        <dbReference type="HAMAP-Rule" id="MF_00019"/>
    </source>
</evidence>
<dbReference type="EC" id="2.3.1.274" evidence="1"/>
<dbReference type="EMBL" id="AE016879">
    <property type="protein sequence ID" value="AAP27719.1"/>
    <property type="molecule type" value="Genomic_DNA"/>
</dbReference>
<dbReference type="EMBL" id="AE017334">
    <property type="protein sequence ID" value="AAT35400.1"/>
    <property type="molecule type" value="Genomic_DNA"/>
</dbReference>
<dbReference type="EMBL" id="AE017225">
    <property type="protein sequence ID" value="AAT56006.1"/>
    <property type="molecule type" value="Genomic_DNA"/>
</dbReference>
<dbReference type="RefSeq" id="NP_846233.1">
    <property type="nucleotide sequence ID" value="NC_003997.3"/>
</dbReference>
<dbReference type="RefSeq" id="WP_000684111.1">
    <property type="nucleotide sequence ID" value="NZ_WXXJ01000026.1"/>
</dbReference>
<dbReference type="RefSeq" id="YP_029955.1">
    <property type="nucleotide sequence ID" value="NC_005945.1"/>
</dbReference>
<dbReference type="SMR" id="Q81WI5"/>
<dbReference type="STRING" id="261594.GBAA_3991"/>
<dbReference type="DNASU" id="1086734"/>
<dbReference type="GeneID" id="45023681"/>
<dbReference type="KEGG" id="ban:BA_3991"/>
<dbReference type="KEGG" id="banh:HYU01_19505"/>
<dbReference type="KEGG" id="bar:GBAA_3991"/>
<dbReference type="KEGG" id="bat:BAS3704"/>
<dbReference type="PATRIC" id="fig|198094.11.peg.3961"/>
<dbReference type="eggNOG" id="COG0416">
    <property type="taxonomic scope" value="Bacteria"/>
</dbReference>
<dbReference type="HOGENOM" id="CLU_039379_1_1_9"/>
<dbReference type="OMA" id="HGKSNAR"/>
<dbReference type="OrthoDB" id="9806408at2"/>
<dbReference type="UniPathway" id="UPA00085"/>
<dbReference type="Proteomes" id="UP000000427">
    <property type="component" value="Chromosome"/>
</dbReference>
<dbReference type="Proteomes" id="UP000000594">
    <property type="component" value="Chromosome"/>
</dbReference>
<dbReference type="GO" id="GO:0005737">
    <property type="term" value="C:cytoplasm"/>
    <property type="evidence" value="ECO:0007669"/>
    <property type="project" value="UniProtKB-SubCell"/>
</dbReference>
<dbReference type="GO" id="GO:0043811">
    <property type="term" value="F:phosphate:acyl-[acyl carrier protein] acyltransferase activity"/>
    <property type="evidence" value="ECO:0007669"/>
    <property type="project" value="UniProtKB-UniRule"/>
</dbReference>
<dbReference type="GO" id="GO:0006633">
    <property type="term" value="P:fatty acid biosynthetic process"/>
    <property type="evidence" value="ECO:0007669"/>
    <property type="project" value="UniProtKB-UniRule"/>
</dbReference>
<dbReference type="GO" id="GO:0008654">
    <property type="term" value="P:phospholipid biosynthetic process"/>
    <property type="evidence" value="ECO:0007669"/>
    <property type="project" value="UniProtKB-KW"/>
</dbReference>
<dbReference type="Gene3D" id="3.40.718.10">
    <property type="entry name" value="Isopropylmalate Dehydrogenase"/>
    <property type="match status" value="1"/>
</dbReference>
<dbReference type="HAMAP" id="MF_00019">
    <property type="entry name" value="PlsX"/>
    <property type="match status" value="1"/>
</dbReference>
<dbReference type="InterPro" id="IPR003664">
    <property type="entry name" value="FA_synthesis"/>
</dbReference>
<dbReference type="InterPro" id="IPR012281">
    <property type="entry name" value="Phospholipid_synth_PlsX-like"/>
</dbReference>
<dbReference type="NCBIfam" id="TIGR00182">
    <property type="entry name" value="plsX"/>
    <property type="match status" value="1"/>
</dbReference>
<dbReference type="PANTHER" id="PTHR30100">
    <property type="entry name" value="FATTY ACID/PHOSPHOLIPID SYNTHESIS PROTEIN PLSX"/>
    <property type="match status" value="1"/>
</dbReference>
<dbReference type="PANTHER" id="PTHR30100:SF1">
    <property type="entry name" value="PHOSPHATE ACYLTRANSFERASE"/>
    <property type="match status" value="1"/>
</dbReference>
<dbReference type="Pfam" id="PF02504">
    <property type="entry name" value="FA_synthesis"/>
    <property type="match status" value="1"/>
</dbReference>
<dbReference type="PIRSF" id="PIRSF002465">
    <property type="entry name" value="Phsphlp_syn_PlsX"/>
    <property type="match status" value="1"/>
</dbReference>
<dbReference type="SUPFAM" id="SSF53659">
    <property type="entry name" value="Isocitrate/Isopropylmalate dehydrogenase-like"/>
    <property type="match status" value="1"/>
</dbReference>